<protein>
    <recommendedName>
        <fullName evidence="4">Small ribosomal subunit protein bS6m</fullName>
    </recommendedName>
    <alternativeName>
        <fullName>28S ribosomal protein S6, mitochondrial</fullName>
        <shortName>MRP-S6</shortName>
        <shortName>S6mt</shortName>
    </alternativeName>
</protein>
<proteinExistence type="evidence at protein level"/>
<gene>
    <name type="primary">MRPS6</name>
    <name type="synonym">RPMS6</name>
</gene>
<name>RT06_BOVIN</name>
<keyword id="KW-0002">3D-structure</keyword>
<keyword id="KW-0903">Direct protein sequencing</keyword>
<keyword id="KW-0496">Mitochondrion</keyword>
<keyword id="KW-1185">Reference proteome</keyword>
<keyword id="KW-0687">Ribonucleoprotein</keyword>
<keyword id="KW-0689">Ribosomal protein</keyword>
<dbReference type="EMBL" id="BC102978">
    <property type="protein sequence ID" value="AAI02979.1"/>
    <property type="molecule type" value="mRNA"/>
</dbReference>
<dbReference type="RefSeq" id="NP_001035674.1">
    <property type="nucleotide sequence ID" value="NM_001040584.2"/>
</dbReference>
<dbReference type="PDB" id="3JD5">
    <property type="method" value="EM"/>
    <property type="resolution" value="7.00 A"/>
    <property type="chains" value="F=1-124"/>
</dbReference>
<dbReference type="PDB" id="6NEQ">
    <property type="method" value="EM"/>
    <property type="resolution" value="3.32 A"/>
    <property type="chains" value="F=1-124"/>
</dbReference>
<dbReference type="PDB" id="6NF8">
    <property type="method" value="EM"/>
    <property type="resolution" value="3.48 A"/>
    <property type="chains" value="F=1-124"/>
</dbReference>
<dbReference type="PDBsum" id="3JD5"/>
<dbReference type="PDBsum" id="6NEQ"/>
<dbReference type="PDBsum" id="6NF8"/>
<dbReference type="EMDB" id="EMD-9358"/>
<dbReference type="EMDB" id="EMD-9362"/>
<dbReference type="SMR" id="P82931"/>
<dbReference type="CORUM" id="P82931"/>
<dbReference type="FunCoup" id="P82931">
    <property type="interactions" value="1905"/>
</dbReference>
<dbReference type="IntAct" id="P82931">
    <property type="interactions" value="2"/>
</dbReference>
<dbReference type="STRING" id="9913.ENSBTAP00000059477"/>
<dbReference type="PaxDb" id="9913-ENSBTAP00000016717"/>
<dbReference type="Ensembl" id="ENSBTAT00000016717.7">
    <property type="protein sequence ID" value="ENSBTAP00000016717.6"/>
    <property type="gene ID" value="ENSBTAG00000012594.7"/>
</dbReference>
<dbReference type="GeneID" id="615431"/>
<dbReference type="KEGG" id="bta:615431"/>
<dbReference type="CTD" id="64968"/>
<dbReference type="VEuPathDB" id="HostDB:ENSBTAG00000012594"/>
<dbReference type="VGNC" id="VGNC:31676">
    <property type="gene designation" value="MRPS6"/>
</dbReference>
<dbReference type="eggNOG" id="KOG4708">
    <property type="taxonomic scope" value="Eukaryota"/>
</dbReference>
<dbReference type="GeneTree" id="ENSGT00940000161679"/>
<dbReference type="InParanoid" id="P82931"/>
<dbReference type="OMA" id="ATHFTIT"/>
<dbReference type="OrthoDB" id="268530at2759"/>
<dbReference type="Reactome" id="R-BTA-5389840">
    <property type="pathway name" value="Mitochondrial translation elongation"/>
</dbReference>
<dbReference type="Reactome" id="R-BTA-5419276">
    <property type="pathway name" value="Mitochondrial translation termination"/>
</dbReference>
<dbReference type="Proteomes" id="UP000009136">
    <property type="component" value="Chromosome 1"/>
</dbReference>
<dbReference type="Bgee" id="ENSBTAG00000012594">
    <property type="expression patterns" value="Expressed in caput epididymis and 104 other cell types or tissues"/>
</dbReference>
<dbReference type="GO" id="GO:0005743">
    <property type="term" value="C:mitochondrial inner membrane"/>
    <property type="evidence" value="ECO:0000304"/>
    <property type="project" value="Reactome"/>
</dbReference>
<dbReference type="GO" id="GO:0005763">
    <property type="term" value="C:mitochondrial small ribosomal subunit"/>
    <property type="evidence" value="ECO:0000314"/>
    <property type="project" value="UniProtKB"/>
</dbReference>
<dbReference type="GO" id="GO:0070181">
    <property type="term" value="F:small ribosomal subunit rRNA binding"/>
    <property type="evidence" value="ECO:0000318"/>
    <property type="project" value="GO_Central"/>
</dbReference>
<dbReference type="GO" id="GO:0003735">
    <property type="term" value="F:structural constituent of ribosome"/>
    <property type="evidence" value="ECO:0007005"/>
    <property type="project" value="UniProtKB"/>
</dbReference>
<dbReference type="GO" id="GO:0032543">
    <property type="term" value="P:mitochondrial translation"/>
    <property type="evidence" value="ECO:0007005"/>
    <property type="project" value="UniProtKB"/>
</dbReference>
<dbReference type="CDD" id="cd15465">
    <property type="entry name" value="bS6_mito"/>
    <property type="match status" value="1"/>
</dbReference>
<dbReference type="FunFam" id="3.30.70.60:FF:000008">
    <property type="entry name" value="28S ribosomal protein S6, mitochondrial"/>
    <property type="match status" value="1"/>
</dbReference>
<dbReference type="Gene3D" id="3.30.70.60">
    <property type="match status" value="1"/>
</dbReference>
<dbReference type="InterPro" id="IPR000529">
    <property type="entry name" value="Ribosomal_bS6"/>
</dbReference>
<dbReference type="InterPro" id="IPR035980">
    <property type="entry name" value="Ribosomal_bS6_sf"/>
</dbReference>
<dbReference type="InterPro" id="IPR014717">
    <property type="entry name" value="Transl_elong_EF1B/ribsomal_bS6"/>
</dbReference>
<dbReference type="NCBIfam" id="TIGR00166">
    <property type="entry name" value="S6"/>
    <property type="match status" value="1"/>
</dbReference>
<dbReference type="PANTHER" id="PTHR21011">
    <property type="entry name" value="MITOCHONDRIAL 28S RIBOSOMAL PROTEIN S6"/>
    <property type="match status" value="1"/>
</dbReference>
<dbReference type="PANTHER" id="PTHR21011:SF1">
    <property type="entry name" value="SMALL RIBOSOMAL SUBUNIT PROTEIN BS6M"/>
    <property type="match status" value="1"/>
</dbReference>
<dbReference type="Pfam" id="PF01250">
    <property type="entry name" value="Ribosomal_S6"/>
    <property type="match status" value="1"/>
</dbReference>
<dbReference type="SUPFAM" id="SSF54995">
    <property type="entry name" value="Ribosomal protein S6"/>
    <property type="match status" value="1"/>
</dbReference>
<evidence type="ECO:0000269" key="1">
    <source>
    </source>
</evidence>
<evidence type="ECO:0000269" key="2">
    <source>
    </source>
</evidence>
<evidence type="ECO:0000269" key="3">
    <source>
    </source>
</evidence>
<evidence type="ECO:0000305" key="4"/>
<evidence type="ECO:0007744" key="5">
    <source>
        <dbReference type="PDB" id="3JD5"/>
    </source>
</evidence>
<evidence type="ECO:0007829" key="6">
    <source>
        <dbReference type="PDB" id="6NEQ"/>
    </source>
</evidence>
<sequence length="124" mass="14148">MPRYELALILKAMQRPETAAALKRTLEALMDRGAVVRSLENLGERTLPYKMSAHSQRHTRGGYFLVDFYAPTTTVASIMEHLSRDIDVIRPNVVKHPLTQEVKECEGIVPVPLEEKLYSTKKRK</sequence>
<reference key="1">
    <citation type="submission" date="2005-08" db="EMBL/GenBank/DDBJ databases">
        <authorList>
            <consortium name="NIH - Mammalian Gene Collection (MGC) project"/>
        </authorList>
    </citation>
    <scope>NUCLEOTIDE SEQUENCE [LARGE SCALE MRNA]</scope>
    <source>
        <strain>Hereford</strain>
        <tissue>Hypothalamus</tissue>
    </source>
</reference>
<reference key="2">
    <citation type="journal article" date="2001" name="J. Biol. Chem.">
        <title>Proteomic analysis of the mammalian mitochondrial ribosome. Identification of protein components in the 28S small subunit.</title>
        <authorList>
            <person name="Suzuki T."/>
            <person name="Terasaki M."/>
            <person name="Takemoto-Hori C."/>
            <person name="Hanada T."/>
            <person name="Ueda T."/>
            <person name="Wada A."/>
            <person name="Watanabe K."/>
        </authorList>
    </citation>
    <scope>PROTEIN SEQUENCE OF 2-19</scope>
    <scope>SUBCELLULAR LOCATION</scope>
    <scope>SUBUNIT</scope>
</reference>
<reference key="3">
    <citation type="journal article" date="2001" name="J. Biol. Chem.">
        <title>The small subunit of the mammalian mitochondrial ribosome: identification of the full complement of ribosomal proteins present.</title>
        <authorList>
            <person name="Koc E.C."/>
            <person name="Burkhart W."/>
            <person name="Blackburn K."/>
            <person name="Moseley A."/>
            <person name="Spremulli L.L."/>
        </authorList>
    </citation>
    <scope>PROTEIN SEQUENCE OF 12-23 AND 104-116</scope>
    <scope>SUBCELLULAR LOCATION</scope>
    <scope>SUBUNIT</scope>
    <source>
        <tissue>Liver</tissue>
    </source>
</reference>
<reference evidence="5" key="4">
    <citation type="journal article" date="2014" name="Proc. Natl. Acad. Sci. U.S.A.">
        <title>Cryo-EM structure of the small subunit of the mammalian mitochondrial ribosome.</title>
        <authorList>
            <person name="Kaushal P.S."/>
            <person name="Sharma M.R."/>
            <person name="Booth T.M."/>
            <person name="Haque E.M."/>
            <person name="Tung C.S."/>
            <person name="Sanbonmatsu K.Y."/>
            <person name="Spremulli L.L."/>
            <person name="Agrawal R.K."/>
        </authorList>
    </citation>
    <scope>STRUCTURE BY ELECTRON MICROSCOPY (7.00 ANGSTROMS)</scope>
    <scope>SUBCELLULAR LOCATION</scope>
    <scope>SUBUNIT</scope>
</reference>
<feature type="initiator methionine" description="Removed" evidence="2">
    <location>
        <position position="1"/>
    </location>
</feature>
<feature type="chain" id="PRO_0000176891" description="Small ribosomal subunit protein bS6m">
    <location>
        <begin position="2"/>
        <end position="124"/>
    </location>
</feature>
<feature type="strand" evidence="6">
    <location>
        <begin position="3"/>
        <end position="12"/>
    </location>
</feature>
<feature type="helix" evidence="6">
    <location>
        <begin position="15"/>
        <end position="30"/>
    </location>
</feature>
<feature type="turn" evidence="6">
    <location>
        <begin position="31"/>
        <end position="33"/>
    </location>
</feature>
<feature type="strand" evidence="6">
    <location>
        <begin position="35"/>
        <end position="52"/>
    </location>
</feature>
<feature type="strand" evidence="6">
    <location>
        <begin position="57"/>
        <end position="69"/>
    </location>
</feature>
<feature type="helix" evidence="6">
    <location>
        <begin position="74"/>
        <end position="83"/>
    </location>
</feature>
<feature type="strand" evidence="6">
    <location>
        <begin position="93"/>
        <end position="95"/>
    </location>
</feature>
<feature type="helix" evidence="6">
    <location>
        <begin position="97"/>
        <end position="99"/>
    </location>
</feature>
<organism>
    <name type="scientific">Bos taurus</name>
    <name type="common">Bovine</name>
    <dbReference type="NCBI Taxonomy" id="9913"/>
    <lineage>
        <taxon>Eukaryota</taxon>
        <taxon>Metazoa</taxon>
        <taxon>Chordata</taxon>
        <taxon>Craniata</taxon>
        <taxon>Vertebrata</taxon>
        <taxon>Euteleostomi</taxon>
        <taxon>Mammalia</taxon>
        <taxon>Eutheria</taxon>
        <taxon>Laurasiatheria</taxon>
        <taxon>Artiodactyla</taxon>
        <taxon>Ruminantia</taxon>
        <taxon>Pecora</taxon>
        <taxon>Bovidae</taxon>
        <taxon>Bovinae</taxon>
        <taxon>Bos</taxon>
    </lineage>
</organism>
<accession>P82931</accession>
<accession>Q3ZC18</accession>
<comment type="subunit">
    <text evidence="1 2 3">Component of the mitochondrial ribosome small subunit (28S) which comprises a 12S rRNA and about 30 distinct proteins.</text>
</comment>
<comment type="subcellular location">
    <subcellularLocation>
        <location evidence="1 2 3">Mitochondrion</location>
    </subcellularLocation>
</comment>
<comment type="similarity">
    <text evidence="4">Belongs to the bacterial ribosomal protein bS6 family.</text>
</comment>